<sequence length="572" mass="65947">MRGIFLIRSRLSIFRAPAVKCLRFSNVLPSLSNNCIVRLYMEPPVACVLPLGLCSMFSTSIADSEQVGFTRSNIEKDDESDIDLGCSISDELVSEDVGKISKLVKDCGSDRKELRNKLEECDVKPSNELVVEILSRVRNDWETAFTFFVWAGKQQGYVRSVREYHSMISILGKMRKFDTAWTLIDEMRKFSPSLVNSQTLLIMIRKYCAVHDVGKAINTFHAYKRFKLEMGIDDFQSLLSALCRYKNVSDAGHLIFCNKDKYPFDAKSFNIVLNGWCNVIGSPREAERVWMEMGNVGVKHDVVSYSSMISCYSKGGSLNKVLKLFDRMKKECIEPDRKVYNAVVHALAKASFVSEARNLMKTMEEEKGIEPNVVTYNSLIKPLCKARKTEEAKQVFDEMLEKGLFPTIRTYHAFMRILRTGEEVFELLAKMRKMGCEPTVETYIMLIRKLCRWRDFDNVLLLWDEMKEKTVGPDLSSYIVMIHGLFLNGKIEEAYGYYKEMKDKGMRPNENVEDMIQSWFSGKQYAEQRITDSKGEVNKGAIVKKSEREKNFLQQPEVRKVVREHGYSFWDE</sequence>
<protein>
    <recommendedName>
        <fullName>Pentatricopeptide repeat-containing protein At5g15010, mitochondrial</fullName>
    </recommendedName>
</protein>
<name>PP383_ARATH</name>
<gene>
    <name type="ordered locus">At5g15010</name>
    <name type="ORF">F2G14_130</name>
</gene>
<proteinExistence type="evidence at transcript level"/>
<dbReference type="EMBL" id="AL391146">
    <property type="protein sequence ID" value="CAC01820.1"/>
    <property type="status" value="ALT_INIT"/>
    <property type="molecule type" value="Genomic_DNA"/>
</dbReference>
<dbReference type="EMBL" id="CP002688">
    <property type="protein sequence ID" value="AED92104.1"/>
    <property type="molecule type" value="Genomic_DNA"/>
</dbReference>
<dbReference type="PIR" id="T51446">
    <property type="entry name" value="T51446"/>
</dbReference>
<dbReference type="RefSeq" id="NP_197005.2">
    <property type="nucleotide sequence ID" value="NM_121505.4"/>
</dbReference>
<dbReference type="SMR" id="Q9LFQ4"/>
<dbReference type="FunCoup" id="Q9LFQ4">
    <property type="interactions" value="761"/>
</dbReference>
<dbReference type="iPTMnet" id="Q9LFQ4"/>
<dbReference type="PaxDb" id="3702-AT5G15010.1"/>
<dbReference type="ProteomicsDB" id="249008"/>
<dbReference type="EnsemblPlants" id="AT5G15010.1">
    <property type="protein sequence ID" value="AT5G15010.1"/>
    <property type="gene ID" value="AT5G15010"/>
</dbReference>
<dbReference type="GeneID" id="831353"/>
<dbReference type="Gramene" id="AT5G15010.1">
    <property type="protein sequence ID" value="AT5G15010.1"/>
    <property type="gene ID" value="AT5G15010"/>
</dbReference>
<dbReference type="KEGG" id="ath:AT5G15010"/>
<dbReference type="Araport" id="AT5G15010"/>
<dbReference type="TAIR" id="AT5G15010"/>
<dbReference type="eggNOG" id="KOG4197">
    <property type="taxonomic scope" value="Eukaryota"/>
</dbReference>
<dbReference type="HOGENOM" id="CLU_002706_49_20_1"/>
<dbReference type="InParanoid" id="Q9LFQ4"/>
<dbReference type="OMA" id="NSCAAAH"/>
<dbReference type="PhylomeDB" id="Q9LFQ4"/>
<dbReference type="PRO" id="PR:Q9LFQ4"/>
<dbReference type="Proteomes" id="UP000006548">
    <property type="component" value="Chromosome 5"/>
</dbReference>
<dbReference type="ExpressionAtlas" id="Q9LFQ4">
    <property type="expression patterns" value="baseline and differential"/>
</dbReference>
<dbReference type="GO" id="GO:0005739">
    <property type="term" value="C:mitochondrion"/>
    <property type="evidence" value="ECO:0007669"/>
    <property type="project" value="UniProtKB-SubCell"/>
</dbReference>
<dbReference type="Gene3D" id="1.25.40.10">
    <property type="entry name" value="Tetratricopeptide repeat domain"/>
    <property type="match status" value="3"/>
</dbReference>
<dbReference type="InterPro" id="IPR002885">
    <property type="entry name" value="Pentatricopeptide_rpt"/>
</dbReference>
<dbReference type="InterPro" id="IPR050667">
    <property type="entry name" value="PPR-containing_protein"/>
</dbReference>
<dbReference type="InterPro" id="IPR011990">
    <property type="entry name" value="TPR-like_helical_dom_sf"/>
</dbReference>
<dbReference type="NCBIfam" id="TIGR00756">
    <property type="entry name" value="PPR"/>
    <property type="match status" value="6"/>
</dbReference>
<dbReference type="PANTHER" id="PTHR47939">
    <property type="entry name" value="MEMBRANE-ASSOCIATED SALT-INDUCIBLE PROTEIN-LIKE"/>
    <property type="match status" value="1"/>
</dbReference>
<dbReference type="PANTHER" id="PTHR47939:SF5">
    <property type="entry name" value="PENTACOTRIPEPTIDE-REPEAT REGION OF PRORP DOMAIN-CONTAINING PROTEIN"/>
    <property type="match status" value="1"/>
</dbReference>
<dbReference type="Pfam" id="PF01535">
    <property type="entry name" value="PPR"/>
    <property type="match status" value="2"/>
</dbReference>
<dbReference type="Pfam" id="PF13041">
    <property type="entry name" value="PPR_2"/>
    <property type="match status" value="3"/>
</dbReference>
<dbReference type="PROSITE" id="PS51375">
    <property type="entry name" value="PPR"/>
    <property type="match status" value="8"/>
</dbReference>
<evidence type="ECO:0000269" key="1">
    <source>
    </source>
</evidence>
<evidence type="ECO:0000305" key="2"/>
<evidence type="ECO:0000305" key="3">
    <source>
    </source>
</evidence>
<comment type="subcellular location">
    <subcellularLocation>
        <location evidence="3">Mitochondrion</location>
    </subcellularLocation>
</comment>
<comment type="similarity">
    <text evidence="2">Belongs to the PPR family. P subfamily.</text>
</comment>
<comment type="sequence caution" evidence="2">
    <conflict type="erroneous initiation">
        <sequence resource="EMBL-CDS" id="CAC01820"/>
    </conflict>
</comment>
<comment type="online information" name="Pentatricopeptide repeat proteins">
    <link uri="https://ppr.plantenergy.uwa.edu.au"/>
</comment>
<organism>
    <name type="scientific">Arabidopsis thaliana</name>
    <name type="common">Mouse-ear cress</name>
    <dbReference type="NCBI Taxonomy" id="3702"/>
    <lineage>
        <taxon>Eukaryota</taxon>
        <taxon>Viridiplantae</taxon>
        <taxon>Streptophyta</taxon>
        <taxon>Embryophyta</taxon>
        <taxon>Tracheophyta</taxon>
        <taxon>Spermatophyta</taxon>
        <taxon>Magnoliopsida</taxon>
        <taxon>eudicotyledons</taxon>
        <taxon>Gunneridae</taxon>
        <taxon>Pentapetalae</taxon>
        <taxon>rosids</taxon>
        <taxon>malvids</taxon>
        <taxon>Brassicales</taxon>
        <taxon>Brassicaceae</taxon>
        <taxon>Camelineae</taxon>
        <taxon>Arabidopsis</taxon>
    </lineage>
</organism>
<reference key="1">
    <citation type="journal article" date="2000" name="Nature">
        <title>Sequence and analysis of chromosome 5 of the plant Arabidopsis thaliana.</title>
        <authorList>
            <person name="Tabata S."/>
            <person name="Kaneko T."/>
            <person name="Nakamura Y."/>
            <person name="Kotani H."/>
            <person name="Kato T."/>
            <person name="Asamizu E."/>
            <person name="Miyajima N."/>
            <person name="Sasamoto S."/>
            <person name="Kimura T."/>
            <person name="Hosouchi T."/>
            <person name="Kawashima K."/>
            <person name="Kohara M."/>
            <person name="Matsumoto M."/>
            <person name="Matsuno A."/>
            <person name="Muraki A."/>
            <person name="Nakayama S."/>
            <person name="Nakazaki N."/>
            <person name="Naruo K."/>
            <person name="Okumura S."/>
            <person name="Shinpo S."/>
            <person name="Takeuchi C."/>
            <person name="Wada T."/>
            <person name="Watanabe A."/>
            <person name="Yamada M."/>
            <person name="Yasuda M."/>
            <person name="Sato S."/>
            <person name="de la Bastide M."/>
            <person name="Huang E."/>
            <person name="Spiegel L."/>
            <person name="Gnoj L."/>
            <person name="O'Shaughnessy A."/>
            <person name="Preston R."/>
            <person name="Habermann K."/>
            <person name="Murray J."/>
            <person name="Johnson D."/>
            <person name="Rohlfing T."/>
            <person name="Nelson J."/>
            <person name="Stoneking T."/>
            <person name="Pepin K."/>
            <person name="Spieth J."/>
            <person name="Sekhon M."/>
            <person name="Armstrong J."/>
            <person name="Becker M."/>
            <person name="Belter E."/>
            <person name="Cordum H."/>
            <person name="Cordes M."/>
            <person name="Courtney L."/>
            <person name="Courtney W."/>
            <person name="Dante M."/>
            <person name="Du H."/>
            <person name="Edwards J."/>
            <person name="Fryman J."/>
            <person name="Haakensen B."/>
            <person name="Lamar E."/>
            <person name="Latreille P."/>
            <person name="Leonard S."/>
            <person name="Meyer R."/>
            <person name="Mulvaney E."/>
            <person name="Ozersky P."/>
            <person name="Riley A."/>
            <person name="Strowmatt C."/>
            <person name="Wagner-McPherson C."/>
            <person name="Wollam A."/>
            <person name="Yoakum M."/>
            <person name="Bell M."/>
            <person name="Dedhia N."/>
            <person name="Parnell L."/>
            <person name="Shah R."/>
            <person name="Rodriguez M."/>
            <person name="Hoon See L."/>
            <person name="Vil D."/>
            <person name="Baker J."/>
            <person name="Kirchoff K."/>
            <person name="Toth K."/>
            <person name="King L."/>
            <person name="Bahret A."/>
            <person name="Miller B."/>
            <person name="Marra M.A."/>
            <person name="Martienssen R."/>
            <person name="McCombie W.R."/>
            <person name="Wilson R.K."/>
            <person name="Murphy G."/>
            <person name="Bancroft I."/>
            <person name="Volckaert G."/>
            <person name="Wambutt R."/>
            <person name="Duesterhoeft A."/>
            <person name="Stiekema W."/>
            <person name="Pohl T."/>
            <person name="Entian K.-D."/>
            <person name="Terryn N."/>
            <person name="Hartley N."/>
            <person name="Bent E."/>
            <person name="Johnson S."/>
            <person name="Langham S.-A."/>
            <person name="McCullagh B."/>
            <person name="Robben J."/>
            <person name="Grymonprez B."/>
            <person name="Zimmermann W."/>
            <person name="Ramsperger U."/>
            <person name="Wedler H."/>
            <person name="Balke K."/>
            <person name="Wedler E."/>
            <person name="Peters S."/>
            <person name="van Staveren M."/>
            <person name="Dirkse W."/>
            <person name="Mooijman P."/>
            <person name="Klein Lankhorst R."/>
            <person name="Weitzenegger T."/>
            <person name="Bothe G."/>
            <person name="Rose M."/>
            <person name="Hauf J."/>
            <person name="Berneiser S."/>
            <person name="Hempel S."/>
            <person name="Feldpausch M."/>
            <person name="Lamberth S."/>
            <person name="Villarroel R."/>
            <person name="Gielen J."/>
            <person name="Ardiles W."/>
            <person name="Bents O."/>
            <person name="Lemcke K."/>
            <person name="Kolesov G."/>
            <person name="Mayer K.F.X."/>
            <person name="Rudd S."/>
            <person name="Schoof H."/>
            <person name="Schueller C."/>
            <person name="Zaccaria P."/>
            <person name="Mewes H.-W."/>
            <person name="Bevan M."/>
            <person name="Fransz P.F."/>
        </authorList>
    </citation>
    <scope>NUCLEOTIDE SEQUENCE [LARGE SCALE GENOMIC DNA]</scope>
    <source>
        <strain>cv. Columbia</strain>
    </source>
</reference>
<reference key="2">
    <citation type="journal article" date="2017" name="Plant J.">
        <title>Araport11: a complete reannotation of the Arabidopsis thaliana reference genome.</title>
        <authorList>
            <person name="Cheng C.Y."/>
            <person name="Krishnakumar V."/>
            <person name="Chan A.P."/>
            <person name="Thibaud-Nissen F."/>
            <person name="Schobel S."/>
            <person name="Town C.D."/>
        </authorList>
    </citation>
    <scope>GENOME REANNOTATION</scope>
    <source>
        <strain>cv. Columbia</strain>
    </source>
</reference>
<reference key="3">
    <citation type="journal article" date="2004" name="Plant Cell">
        <title>Genome-wide analysis of Arabidopsis pentatricopeptide repeat proteins reveals their essential role in organelle biogenesis.</title>
        <authorList>
            <person name="Lurin C."/>
            <person name="Andres C."/>
            <person name="Aubourg S."/>
            <person name="Bellaoui M."/>
            <person name="Bitton F."/>
            <person name="Bruyere C."/>
            <person name="Caboche M."/>
            <person name="Debast C."/>
            <person name="Gualberto J."/>
            <person name="Hoffmann B."/>
            <person name="Lecharny A."/>
            <person name="Le Ret M."/>
            <person name="Martin-Magniette M.-L."/>
            <person name="Mireau H."/>
            <person name="Peeters N."/>
            <person name="Renou J.-P."/>
            <person name="Szurek B."/>
            <person name="Taconnat L."/>
            <person name="Small I."/>
        </authorList>
    </citation>
    <scope>GENE FAMILY</scope>
</reference>
<reference key="4">
    <citation type="journal article" date="2015" name="J. Exp. Bot.">
        <title>Identification of cleavage sites and substrate proteins for two mitochondrial intermediate peptidases in Arabidopsis thaliana.</title>
        <authorList>
            <person name="Carrie C."/>
            <person name="Venne A.S."/>
            <person name="Zahedi R.P."/>
            <person name="Soll J."/>
        </authorList>
    </citation>
    <scope>IDENTIFICATION BY MASS SPECTROMETRY</scope>
    <scope>CLEAVAGE OF TRANSIT PEPTIDE AFTER PHE-57</scope>
</reference>
<accession>Q9LFQ4</accession>
<feature type="transit peptide" description="Mitochondrion" evidence="1">
    <location>
        <begin position="1"/>
        <end position="57"/>
    </location>
</feature>
<feature type="chain" id="PRO_0000363520" description="Pentatricopeptide repeat-containing protein At5g15010, mitochondrial">
    <location>
        <begin position="58"/>
        <end position="572"/>
    </location>
</feature>
<feature type="repeat" description="PPR 1">
    <location>
        <begin position="160"/>
        <end position="194"/>
    </location>
</feature>
<feature type="repeat" description="PPR 2">
    <location>
        <begin position="196"/>
        <end position="230"/>
    </location>
</feature>
<feature type="repeat" description="PPR 3">
    <location>
        <begin position="231"/>
        <end position="261"/>
    </location>
</feature>
<feature type="repeat" description="PPR 4">
    <location>
        <begin position="265"/>
        <end position="300"/>
    </location>
</feature>
<feature type="repeat" description="PPR 5">
    <location>
        <begin position="301"/>
        <end position="335"/>
    </location>
</feature>
<feature type="repeat" description="PPR 6">
    <location>
        <begin position="336"/>
        <end position="371"/>
    </location>
</feature>
<feature type="repeat" description="PPR 7">
    <location>
        <begin position="372"/>
        <end position="406"/>
    </location>
</feature>
<feature type="repeat" description="PPR 8">
    <location>
        <begin position="412"/>
        <end position="438"/>
    </location>
</feature>
<feature type="repeat" description="PPR 9">
    <location>
        <begin position="439"/>
        <end position="473"/>
    </location>
</feature>
<feature type="repeat" description="PPR 10">
    <location>
        <begin position="474"/>
        <end position="508"/>
    </location>
</feature>
<keyword id="KW-0496">Mitochondrion</keyword>
<keyword id="KW-1185">Reference proteome</keyword>
<keyword id="KW-0677">Repeat</keyword>
<keyword id="KW-0809">Transit peptide</keyword>